<sequence length="352" mass="38906">MRGNRLVEFPDDFWIPIPLDTNNVTALSPFLVPQDHLGSPTIFYSMSALMFVLFVAGTAINLLTIACTLQYKKLRSHLNYILVNMAVANLIVASTGSSTCFVCFAFKYMVLGPLGCKIEGFTAALGGMVSLWSLAVIAFERWLVICKPLGNFVFKSEHALLCCALTWVCGLCASVPPLVGWSRYIPEGMQCSCGPDWYTTGNKFNNESFVMFLFCFCFAVPFSIIVFCYSQLLFTLKMAAKAQADSASTQKAEKEVTRMVVVMVVAFLVCYVPYASFALWVINNRGQTFDLRLATIPSCVSKASTVYNPVIYVLLNKQFRLCMKKMLGMSADEDEESSTSQSTTEVSKVGPS</sequence>
<keyword id="KW-0157">Chromophore</keyword>
<keyword id="KW-1015">Disulfide bond</keyword>
<keyword id="KW-0297">G-protein coupled receptor</keyword>
<keyword id="KW-0325">Glycoprotein</keyword>
<keyword id="KW-0472">Membrane</keyword>
<keyword id="KW-0597">Phosphoprotein</keyword>
<keyword id="KW-0600">Photoreceptor protein</keyword>
<keyword id="KW-0675">Receptor</keyword>
<keyword id="KW-1185">Reference proteome</keyword>
<keyword id="KW-0681">Retinal protein</keyword>
<keyword id="KW-0716">Sensory transduction</keyword>
<keyword id="KW-0807">Transducer</keyword>
<keyword id="KW-0812">Transmembrane</keyword>
<keyword id="KW-1133">Transmembrane helix</keyword>
<keyword id="KW-0844">Vision</keyword>
<proteinExistence type="evidence at transcript level"/>
<organism>
    <name type="scientific">Oryzias latipes</name>
    <name type="common">Japanese rice fish</name>
    <name type="synonym">Japanese killifish</name>
    <dbReference type="NCBI Taxonomy" id="8090"/>
    <lineage>
        <taxon>Eukaryota</taxon>
        <taxon>Metazoa</taxon>
        <taxon>Chordata</taxon>
        <taxon>Craniata</taxon>
        <taxon>Vertebrata</taxon>
        <taxon>Euteleostomi</taxon>
        <taxon>Actinopterygii</taxon>
        <taxon>Neopterygii</taxon>
        <taxon>Teleostei</taxon>
        <taxon>Neoteleostei</taxon>
        <taxon>Acanthomorphata</taxon>
        <taxon>Ovalentaria</taxon>
        <taxon>Atherinomorphae</taxon>
        <taxon>Beloniformes</taxon>
        <taxon>Adrianichthyidae</taxon>
        <taxon>Oryziinae</taxon>
        <taxon>Oryzias</taxon>
    </lineage>
</organism>
<protein>
    <recommendedName>
        <fullName>Blue-sensitive opsin</fullName>
    </recommendedName>
    <alternativeName>
        <fullName>Blue cone photoreceptor pigment</fullName>
    </alternativeName>
    <alternativeName>
        <fullName>KFH-B</fullName>
    </alternativeName>
</protein>
<accession>P87365</accession>
<feature type="chain" id="PRO_0000197758" description="Blue-sensitive opsin">
    <location>
        <begin position="1"/>
        <end position="352"/>
    </location>
</feature>
<feature type="topological domain" description="Extracellular" evidence="2">
    <location>
        <begin position="1"/>
        <end position="42"/>
    </location>
</feature>
<feature type="transmembrane region" description="Helical; Name=1" evidence="2">
    <location>
        <begin position="43"/>
        <end position="67"/>
    </location>
</feature>
<feature type="topological domain" description="Cytoplasmic" evidence="2">
    <location>
        <begin position="68"/>
        <end position="79"/>
    </location>
</feature>
<feature type="transmembrane region" description="Helical; Name=2" evidence="2">
    <location>
        <begin position="80"/>
        <end position="105"/>
    </location>
</feature>
<feature type="topological domain" description="Extracellular" evidence="2">
    <location>
        <begin position="106"/>
        <end position="119"/>
    </location>
</feature>
<feature type="transmembrane region" description="Helical; Name=3" evidence="2">
    <location>
        <begin position="120"/>
        <end position="139"/>
    </location>
</feature>
<feature type="topological domain" description="Cytoplasmic" evidence="2">
    <location>
        <begin position="140"/>
        <end position="158"/>
    </location>
</feature>
<feature type="transmembrane region" description="Helical; Name=4" evidence="2">
    <location>
        <begin position="159"/>
        <end position="182"/>
    </location>
</feature>
<feature type="topological domain" description="Extracellular" evidence="2">
    <location>
        <begin position="183"/>
        <end position="208"/>
    </location>
</feature>
<feature type="transmembrane region" description="Helical; Name=5" evidence="2">
    <location>
        <begin position="209"/>
        <end position="236"/>
    </location>
</feature>
<feature type="topological domain" description="Cytoplasmic" evidence="2">
    <location>
        <begin position="237"/>
        <end position="258"/>
    </location>
</feature>
<feature type="transmembrane region" description="Helical; Name=6" evidence="2">
    <location>
        <begin position="259"/>
        <end position="282"/>
    </location>
</feature>
<feature type="topological domain" description="Extracellular" evidence="2">
    <location>
        <begin position="283"/>
        <end position="290"/>
    </location>
</feature>
<feature type="transmembrane region" description="Helical; Name=7" evidence="2">
    <location>
        <begin position="291"/>
        <end position="315"/>
    </location>
</feature>
<feature type="topological domain" description="Cytoplasmic" evidence="2">
    <location>
        <begin position="316"/>
        <end position="352"/>
    </location>
</feature>
<feature type="region of interest" description="Disordered" evidence="4">
    <location>
        <begin position="332"/>
        <end position="352"/>
    </location>
</feature>
<feature type="modified residue" description="N6-(retinylidene)lysine" evidence="1">
    <location>
        <position position="302"/>
    </location>
</feature>
<feature type="glycosylation site" description="N-linked (GlcNAc...) asparagine" evidence="2">
    <location>
        <position position="23"/>
    </location>
</feature>
<feature type="glycosylation site" description="N-linked (GlcNAc...) asparagine" evidence="2">
    <location>
        <position position="206"/>
    </location>
</feature>
<feature type="disulfide bond" evidence="3">
    <location>
        <begin position="116"/>
        <end position="193"/>
    </location>
</feature>
<name>OPSB_ORYLA</name>
<dbReference type="EMBL" id="AB001602">
    <property type="protein sequence ID" value="BAA19419.1"/>
    <property type="molecule type" value="mRNA"/>
</dbReference>
<dbReference type="RefSeq" id="NP_001098124.1">
    <property type="nucleotide sequence ID" value="NM_001104654.1"/>
</dbReference>
<dbReference type="SMR" id="P87365"/>
<dbReference type="FunCoup" id="P87365">
    <property type="interactions" value="8"/>
</dbReference>
<dbReference type="STRING" id="8090.ENSORLP00000017624"/>
<dbReference type="Ensembl" id="ENSORLT00000017628.2">
    <property type="protein sequence ID" value="ENSORLP00000017627.2"/>
    <property type="gene ID" value="ENSORLG00000028370.1"/>
</dbReference>
<dbReference type="GeneID" id="100049179"/>
<dbReference type="KEGG" id="ola:100049179"/>
<dbReference type="CTD" id="100049179"/>
<dbReference type="GeneTree" id="ENSGT01030000234549"/>
<dbReference type="InParanoid" id="P87365"/>
<dbReference type="OrthoDB" id="6142583at2759"/>
<dbReference type="Proteomes" id="UP000001038">
    <property type="component" value="Chromosome 5"/>
</dbReference>
<dbReference type="Proteomes" id="UP000265180">
    <property type="component" value="Unplaced"/>
</dbReference>
<dbReference type="Proteomes" id="UP000265200">
    <property type="component" value="Unplaced"/>
</dbReference>
<dbReference type="Bgee" id="ENSORLG00000028370">
    <property type="expression patterns" value="Expressed in gastrula and 10 other cell types or tissues"/>
</dbReference>
<dbReference type="GO" id="GO:0001750">
    <property type="term" value="C:photoreceptor outer segment"/>
    <property type="evidence" value="ECO:0000318"/>
    <property type="project" value="GO_Central"/>
</dbReference>
<dbReference type="GO" id="GO:0005886">
    <property type="term" value="C:plasma membrane"/>
    <property type="evidence" value="ECO:0000318"/>
    <property type="project" value="GO_Central"/>
</dbReference>
<dbReference type="GO" id="GO:0008020">
    <property type="term" value="F:G protein-coupled photoreceptor activity"/>
    <property type="evidence" value="ECO:0000318"/>
    <property type="project" value="GO_Central"/>
</dbReference>
<dbReference type="GO" id="GO:0071482">
    <property type="term" value="P:cellular response to light stimulus"/>
    <property type="evidence" value="ECO:0000318"/>
    <property type="project" value="GO_Central"/>
</dbReference>
<dbReference type="GO" id="GO:0007186">
    <property type="term" value="P:G protein-coupled receptor signaling pathway"/>
    <property type="evidence" value="ECO:0000318"/>
    <property type="project" value="GO_Central"/>
</dbReference>
<dbReference type="GO" id="GO:0007602">
    <property type="term" value="P:phototransduction"/>
    <property type="evidence" value="ECO:0000318"/>
    <property type="project" value="GO_Central"/>
</dbReference>
<dbReference type="GO" id="GO:0007601">
    <property type="term" value="P:visual perception"/>
    <property type="evidence" value="ECO:0007669"/>
    <property type="project" value="UniProtKB-KW"/>
</dbReference>
<dbReference type="FunFam" id="1.20.1070.10:FF:000018">
    <property type="entry name" value="Rhodopsin"/>
    <property type="match status" value="1"/>
</dbReference>
<dbReference type="Gene3D" id="1.20.1070.10">
    <property type="entry name" value="Rhodopsin 7-helix transmembrane proteins"/>
    <property type="match status" value="1"/>
</dbReference>
<dbReference type="InterPro" id="IPR050125">
    <property type="entry name" value="GPCR_opsins"/>
</dbReference>
<dbReference type="InterPro" id="IPR000276">
    <property type="entry name" value="GPCR_Rhodpsn"/>
</dbReference>
<dbReference type="InterPro" id="IPR017452">
    <property type="entry name" value="GPCR_Rhodpsn_7TM"/>
</dbReference>
<dbReference type="InterPro" id="IPR001760">
    <property type="entry name" value="Opsin"/>
</dbReference>
<dbReference type="InterPro" id="IPR001521">
    <property type="entry name" value="Opsin_blue"/>
</dbReference>
<dbReference type="InterPro" id="IPR027430">
    <property type="entry name" value="Retinal_BS"/>
</dbReference>
<dbReference type="PANTHER" id="PTHR24240">
    <property type="entry name" value="OPSIN"/>
    <property type="match status" value="1"/>
</dbReference>
<dbReference type="Pfam" id="PF00001">
    <property type="entry name" value="7tm_1"/>
    <property type="match status" value="1"/>
</dbReference>
<dbReference type="PRINTS" id="PR00237">
    <property type="entry name" value="GPCRRHODOPSN"/>
</dbReference>
<dbReference type="PRINTS" id="PR00238">
    <property type="entry name" value="OPSIN"/>
</dbReference>
<dbReference type="PRINTS" id="PR00574">
    <property type="entry name" value="OPSINBLUE"/>
</dbReference>
<dbReference type="SUPFAM" id="SSF81321">
    <property type="entry name" value="Family A G protein-coupled receptor-like"/>
    <property type="match status" value="1"/>
</dbReference>
<dbReference type="PROSITE" id="PS00237">
    <property type="entry name" value="G_PROTEIN_RECEP_F1_1"/>
    <property type="match status" value="1"/>
</dbReference>
<dbReference type="PROSITE" id="PS50262">
    <property type="entry name" value="G_PROTEIN_RECEP_F1_2"/>
    <property type="match status" value="1"/>
</dbReference>
<dbReference type="PROSITE" id="PS00238">
    <property type="entry name" value="OPSIN"/>
    <property type="match status" value="1"/>
</dbReference>
<comment type="function">
    <text>Visual pigments are the light-absorbing molecules that mediate vision. They consist of an apoprotein, opsin, covalently linked to cis-retinal.</text>
</comment>
<comment type="subcellular location">
    <subcellularLocation>
        <location>Membrane</location>
        <topology>Multi-pass membrane protein</topology>
    </subcellularLocation>
</comment>
<comment type="tissue specificity">
    <text>The color pigments are found in the cone photoreceptor cells.</text>
</comment>
<comment type="PTM">
    <text evidence="1">Phosphorylated on some or all of the serine and threonine residues present in the C-terminal region.</text>
</comment>
<comment type="similarity">
    <text evidence="3">Belongs to the G-protein coupled receptor 1 family. Opsin subfamily.</text>
</comment>
<evidence type="ECO:0000250" key="1"/>
<evidence type="ECO:0000255" key="2"/>
<evidence type="ECO:0000255" key="3">
    <source>
        <dbReference type="PROSITE-ProRule" id="PRU00521"/>
    </source>
</evidence>
<evidence type="ECO:0000256" key="4">
    <source>
        <dbReference type="SAM" id="MobiDB-lite"/>
    </source>
</evidence>
<reference key="1">
    <citation type="submission" date="1997-03" db="EMBL/GenBank/DDBJ databases">
        <authorList>
            <person name="Hisatomi O."/>
            <person name="Satoh T."/>
            <person name="Tokunaga F."/>
        </authorList>
    </citation>
    <scope>NUCLEOTIDE SEQUENCE [MRNA]</scope>
    <source>
        <tissue>Retina</tissue>
    </source>
</reference>